<feature type="chain" id="PRO_0000074801" description="Sensor protein LytS">
    <location>
        <begin position="1"/>
        <end position="581"/>
    </location>
</feature>
<feature type="transmembrane region" description="Helical" evidence="2">
    <location>
        <begin position="4"/>
        <end position="26"/>
    </location>
</feature>
<feature type="transmembrane region" description="Helical" evidence="2">
    <location>
        <begin position="38"/>
        <end position="57"/>
    </location>
</feature>
<feature type="transmembrane region" description="Helical" evidence="2">
    <location>
        <begin position="86"/>
        <end position="108"/>
    </location>
</feature>
<feature type="transmembrane region" description="Helical" evidence="2">
    <location>
        <begin position="115"/>
        <end position="137"/>
    </location>
</feature>
<feature type="transmembrane region" description="Helical" evidence="2">
    <location>
        <begin position="152"/>
        <end position="174"/>
    </location>
</feature>
<feature type="transmembrane region" description="Helical" evidence="2">
    <location>
        <begin position="179"/>
        <end position="198"/>
    </location>
</feature>
<feature type="domain" description="GAF">
    <location>
        <begin position="231"/>
        <end position="355"/>
    </location>
</feature>
<feature type="domain" description="Histidine kinase">
    <location>
        <begin position="356"/>
        <end position="571"/>
    </location>
</feature>
<feature type="modified residue" description="Phosphohistidine; by autocatalysis" evidence="1">
    <location>
        <position position="383"/>
    </location>
</feature>
<proteinExistence type="inferred from homology"/>
<sequence length="581" mass="64549">MLMVLLFQRLGIIMILAFLLVNNSYFRQLIEERSKRETVVLVIIFGLFVIISNITGIEIKGDRSLVERPFLTTISHSDSLANTRTLVITTASLVGGPLVGSIVGFIGGVHRFFQGSFSGSFYIVSSVLVGIVSGKIGDKLKENHLYPSTSQVILISIIAESIQMLFVGIFTGWELVKMIVIPMMILNSLGSTLFLAILKTYLSNESQLRAVQTRDVLELTRQTLPYLRQGLTPQSARSVCEIIKRHTNFDAVGLTDRSNVLAHIGVGHDHHIAGQPVKTDLSKSVIFDGEPRIAQDKAAISCPDHNCQLNSAIVVPLKINDKTVGALKMYFAGDKTMSEVEENLVLGLAQIFSGQLAMGITEEQNKLASMAEIKALQAQINPHFFFNAINTISALIRIDSDKARYALMQLSTFFRTSLQGGQDREVTLEQEKSHVDAYMNVEKLRFPDKYQLSYDISAPEKMKLPPFGLQVLVENAVRHAFKERKTDNHILVQIKPDGHYYCVSVSDNGQGISDTIIDKLGQETVAESKGTGTALVNLNNRLNLLYGSVSCLHFSSDKNGTKVWYRIPNRIREDEHENFNS</sequence>
<organism>
    <name type="scientific">Streptococcus agalactiae serotype III (strain NEM316)</name>
    <dbReference type="NCBI Taxonomy" id="211110"/>
    <lineage>
        <taxon>Bacteria</taxon>
        <taxon>Bacillati</taxon>
        <taxon>Bacillota</taxon>
        <taxon>Bacilli</taxon>
        <taxon>Lactobacillales</taxon>
        <taxon>Streptococcaceae</taxon>
        <taxon>Streptococcus</taxon>
    </lineage>
</organism>
<gene>
    <name type="primary">lytS</name>
    <name type="ordered locus">gbs0180</name>
</gene>
<name>LYTS_STRA3</name>
<accession>Q8E7H4</accession>
<evidence type="ECO:0000250" key="1"/>
<evidence type="ECO:0000255" key="2"/>
<reference key="1">
    <citation type="journal article" date="2002" name="Mol. Microbiol.">
        <title>Genome sequence of Streptococcus agalactiae, a pathogen causing invasive neonatal disease.</title>
        <authorList>
            <person name="Glaser P."/>
            <person name="Rusniok C."/>
            <person name="Buchrieser C."/>
            <person name="Chevalier F."/>
            <person name="Frangeul L."/>
            <person name="Msadek T."/>
            <person name="Zouine M."/>
            <person name="Couve E."/>
            <person name="Lalioui L."/>
            <person name="Poyart C."/>
            <person name="Trieu-Cuot P."/>
            <person name="Kunst F."/>
        </authorList>
    </citation>
    <scope>NUCLEOTIDE SEQUENCE [LARGE SCALE GENOMIC DNA]</scope>
    <source>
        <strain>NEM316</strain>
    </source>
</reference>
<comment type="function">
    <text evidence="1">Member of the two-component regulatory system LytR/LytS that probably regulates genes involved in cell wall metabolism.</text>
</comment>
<comment type="catalytic activity">
    <reaction>
        <text>ATP + protein L-histidine = ADP + protein N-phospho-L-histidine.</text>
        <dbReference type="EC" id="2.7.13.3"/>
    </reaction>
</comment>
<comment type="subcellular location">
    <subcellularLocation>
        <location evidence="1">Cell membrane</location>
        <topology evidence="1">Multi-pass membrane protein</topology>
    </subcellularLocation>
</comment>
<keyword id="KW-0067">ATP-binding</keyword>
<keyword id="KW-1003">Cell membrane</keyword>
<keyword id="KW-0418">Kinase</keyword>
<keyword id="KW-0472">Membrane</keyword>
<keyword id="KW-0547">Nucleotide-binding</keyword>
<keyword id="KW-0597">Phosphoprotein</keyword>
<keyword id="KW-0808">Transferase</keyword>
<keyword id="KW-0812">Transmembrane</keyword>
<keyword id="KW-1133">Transmembrane helix</keyword>
<keyword id="KW-0902">Two-component regulatory system</keyword>
<protein>
    <recommendedName>
        <fullName>Sensor protein LytS</fullName>
        <ecNumber>2.7.13.3</ecNumber>
    </recommendedName>
</protein>
<dbReference type="EC" id="2.7.13.3"/>
<dbReference type="EMBL" id="AL766844">
    <property type="protein sequence ID" value="CAD45825.1"/>
    <property type="molecule type" value="Genomic_DNA"/>
</dbReference>
<dbReference type="RefSeq" id="WP_000930334.1">
    <property type="nucleotide sequence ID" value="NC_004368.1"/>
</dbReference>
<dbReference type="SMR" id="Q8E7H4"/>
<dbReference type="KEGG" id="san:gbs0180"/>
<dbReference type="eggNOG" id="COG3275">
    <property type="taxonomic scope" value="Bacteria"/>
</dbReference>
<dbReference type="HOGENOM" id="CLU_020473_3_3_9"/>
<dbReference type="Proteomes" id="UP000000823">
    <property type="component" value="Chromosome"/>
</dbReference>
<dbReference type="GO" id="GO:0005886">
    <property type="term" value="C:plasma membrane"/>
    <property type="evidence" value="ECO:0007669"/>
    <property type="project" value="UniProtKB-SubCell"/>
</dbReference>
<dbReference type="GO" id="GO:0005524">
    <property type="term" value="F:ATP binding"/>
    <property type="evidence" value="ECO:0007669"/>
    <property type="project" value="UniProtKB-KW"/>
</dbReference>
<dbReference type="GO" id="GO:0000155">
    <property type="term" value="F:phosphorelay sensor kinase activity"/>
    <property type="evidence" value="ECO:0007669"/>
    <property type="project" value="InterPro"/>
</dbReference>
<dbReference type="GO" id="GO:0071555">
    <property type="term" value="P:cell wall organization"/>
    <property type="evidence" value="ECO:0007669"/>
    <property type="project" value="InterPro"/>
</dbReference>
<dbReference type="CDD" id="cd16957">
    <property type="entry name" value="HATPase_LytS-like"/>
    <property type="match status" value="1"/>
</dbReference>
<dbReference type="Gene3D" id="3.30.450.40">
    <property type="match status" value="1"/>
</dbReference>
<dbReference type="Gene3D" id="3.30.565.10">
    <property type="entry name" value="Histidine kinase-like ATPase, C-terminal domain"/>
    <property type="match status" value="1"/>
</dbReference>
<dbReference type="InterPro" id="IPR050640">
    <property type="entry name" value="Bact_2-comp_sensor_kinase"/>
</dbReference>
<dbReference type="InterPro" id="IPR029016">
    <property type="entry name" value="GAF-like_dom_sf"/>
</dbReference>
<dbReference type="InterPro" id="IPR036890">
    <property type="entry name" value="HATPase_C_sf"/>
</dbReference>
<dbReference type="InterPro" id="IPR010559">
    <property type="entry name" value="Sig_transdc_His_kin_internal"/>
</dbReference>
<dbReference type="InterPro" id="IPR011620">
    <property type="entry name" value="Sig_transdc_His_kinase_LytS_TM"/>
</dbReference>
<dbReference type="PANTHER" id="PTHR34220">
    <property type="entry name" value="SENSOR HISTIDINE KINASE YPDA"/>
    <property type="match status" value="1"/>
</dbReference>
<dbReference type="PANTHER" id="PTHR34220:SF7">
    <property type="entry name" value="SENSOR HISTIDINE KINASE YPDA"/>
    <property type="match status" value="1"/>
</dbReference>
<dbReference type="Pfam" id="PF07694">
    <property type="entry name" value="5TM-5TMR_LYT"/>
    <property type="match status" value="1"/>
</dbReference>
<dbReference type="Pfam" id="PF02518">
    <property type="entry name" value="HATPase_c"/>
    <property type="match status" value="1"/>
</dbReference>
<dbReference type="Pfam" id="PF06580">
    <property type="entry name" value="His_kinase"/>
    <property type="match status" value="1"/>
</dbReference>
<dbReference type="SMART" id="SM00387">
    <property type="entry name" value="HATPase_c"/>
    <property type="match status" value="1"/>
</dbReference>
<dbReference type="SUPFAM" id="SSF55874">
    <property type="entry name" value="ATPase domain of HSP90 chaperone/DNA topoisomerase II/histidine kinase"/>
    <property type="match status" value="1"/>
</dbReference>
<dbReference type="SUPFAM" id="SSF55781">
    <property type="entry name" value="GAF domain-like"/>
    <property type="match status" value="1"/>
</dbReference>